<keyword id="KW-0150">Chloroplast</keyword>
<keyword id="KW-0472">Membrane</keyword>
<keyword id="KW-0602">Photosynthesis</keyword>
<keyword id="KW-0603">Photosystem I</keyword>
<keyword id="KW-0934">Plastid</keyword>
<keyword id="KW-0793">Thylakoid</keyword>
<keyword id="KW-0812">Transmembrane</keyword>
<keyword id="KW-1133">Transmembrane helix</keyword>
<proteinExistence type="inferred from homology"/>
<organism>
    <name type="scientific">Trieres chinensis</name>
    <name type="common">Marine centric diatom</name>
    <name type="synonym">Odontella sinensis</name>
    <dbReference type="NCBI Taxonomy" id="1514140"/>
    <lineage>
        <taxon>Eukaryota</taxon>
        <taxon>Sar</taxon>
        <taxon>Stramenopiles</taxon>
        <taxon>Ochrophyta</taxon>
        <taxon>Bacillariophyta</taxon>
        <taxon>Mediophyceae</taxon>
        <taxon>Biddulphiophycidae</taxon>
        <taxon>Eupodiscales</taxon>
        <taxon>Parodontellaceae</taxon>
        <taxon>Trieres</taxon>
    </lineage>
</organism>
<gene>
    <name evidence="1" type="primary">psaM</name>
</gene>
<name>PSAM_TRICV</name>
<evidence type="ECO:0000255" key="1">
    <source>
        <dbReference type="HAMAP-Rule" id="MF_00828"/>
    </source>
</evidence>
<dbReference type="EMBL" id="Z67753">
    <property type="protein sequence ID" value="CAA91676.1"/>
    <property type="molecule type" value="Genomic_DNA"/>
</dbReference>
<dbReference type="PIR" id="S78303">
    <property type="entry name" value="S78303"/>
</dbReference>
<dbReference type="RefSeq" id="NP_043644.1">
    <property type="nucleotide sequence ID" value="NC_001713.1"/>
</dbReference>
<dbReference type="SMR" id="P49487"/>
<dbReference type="GeneID" id="801816"/>
<dbReference type="GO" id="GO:0009535">
    <property type="term" value="C:chloroplast thylakoid membrane"/>
    <property type="evidence" value="ECO:0007669"/>
    <property type="project" value="UniProtKB-SubCell"/>
</dbReference>
<dbReference type="GO" id="GO:0009522">
    <property type="term" value="C:photosystem I"/>
    <property type="evidence" value="ECO:0007669"/>
    <property type="project" value="UniProtKB-KW"/>
</dbReference>
<dbReference type="GO" id="GO:0015979">
    <property type="term" value="P:photosynthesis"/>
    <property type="evidence" value="ECO:0007669"/>
    <property type="project" value="UniProtKB-UniRule"/>
</dbReference>
<dbReference type="HAMAP" id="MF_00828">
    <property type="entry name" value="PSI_PsaM"/>
    <property type="match status" value="1"/>
</dbReference>
<dbReference type="InterPro" id="IPR010010">
    <property type="entry name" value="PSI_PsaM"/>
</dbReference>
<dbReference type="InterPro" id="IPR037279">
    <property type="entry name" value="PSI_PsaM_sf"/>
</dbReference>
<dbReference type="NCBIfam" id="TIGR03053">
    <property type="entry name" value="PS_I_psaM"/>
    <property type="match status" value="1"/>
</dbReference>
<dbReference type="Pfam" id="PF07465">
    <property type="entry name" value="PsaM"/>
    <property type="match status" value="1"/>
</dbReference>
<dbReference type="SUPFAM" id="SSF81548">
    <property type="entry name" value="Subunit XII of photosystem I reaction centre, PsaM"/>
    <property type="match status" value="1"/>
</dbReference>
<protein>
    <recommendedName>
        <fullName evidence="1">Photosystem I reaction center subunit XII</fullName>
    </recommendedName>
    <alternativeName>
        <fullName evidence="1">PSI-M</fullName>
    </alternativeName>
</protein>
<comment type="subcellular location">
    <subcellularLocation>
        <location evidence="1">Plastid</location>
        <location evidence="1">Chloroplast thylakoid membrane</location>
        <topology evidence="1">Single-pass membrane protein</topology>
    </subcellularLocation>
</comment>
<comment type="similarity">
    <text evidence="1">Belongs to the PsaM family.</text>
</comment>
<geneLocation type="chloroplast"/>
<reference key="1">
    <citation type="journal article" date="1995" name="Plant Mol. Biol. Rep.">
        <title>The chloroplast genome of a chlorophyll a+c-containing alga, Odontella sinensis.</title>
        <authorList>
            <person name="Kowallik K.V."/>
            <person name="Stoebe B."/>
            <person name="Schaffran I."/>
            <person name="Kroth-Pancic P."/>
            <person name="Freier U."/>
        </authorList>
    </citation>
    <scope>NUCLEOTIDE SEQUENCE [LARGE SCALE GENOMIC DNA]</scope>
</reference>
<accession>P49487</accession>
<feature type="chain" id="PRO_0000207766" description="Photosystem I reaction center subunit XII">
    <location>
        <begin position="1"/>
        <end position="30"/>
    </location>
</feature>
<feature type="transmembrane region" description="Helical" evidence="1">
    <location>
        <begin position="7"/>
        <end position="29"/>
    </location>
</feature>
<sequence length="30" mass="3329">MIYDSQVYTVLLIALLASVLAIRLGSTLYQ</sequence>